<keyword id="KW-0067">ATP-binding</keyword>
<keyword id="KW-0963">Cytoplasm</keyword>
<keyword id="KW-0418">Kinase</keyword>
<keyword id="KW-0547">Nucleotide-binding</keyword>
<keyword id="KW-0665">Pyrimidine biosynthesis</keyword>
<keyword id="KW-1185">Reference proteome</keyword>
<keyword id="KW-0808">Transferase</keyword>
<gene>
    <name evidence="1" type="primary">pyrH</name>
    <name type="ordered locus">Swol_0884</name>
</gene>
<feature type="chain" id="PRO_1000054044" description="Uridylate kinase">
    <location>
        <begin position="1"/>
        <end position="238"/>
    </location>
</feature>
<feature type="binding site" evidence="1">
    <location>
        <begin position="12"/>
        <end position="15"/>
    </location>
    <ligand>
        <name>ATP</name>
        <dbReference type="ChEBI" id="CHEBI:30616"/>
    </ligand>
</feature>
<feature type="binding site" evidence="1">
    <location>
        <position position="54"/>
    </location>
    <ligand>
        <name>UMP</name>
        <dbReference type="ChEBI" id="CHEBI:57865"/>
    </ligand>
</feature>
<feature type="binding site" evidence="1">
    <location>
        <position position="55"/>
    </location>
    <ligand>
        <name>ATP</name>
        <dbReference type="ChEBI" id="CHEBI:30616"/>
    </ligand>
</feature>
<feature type="binding site" evidence="1">
    <location>
        <position position="59"/>
    </location>
    <ligand>
        <name>ATP</name>
        <dbReference type="ChEBI" id="CHEBI:30616"/>
    </ligand>
</feature>
<feature type="binding site" evidence="1">
    <location>
        <position position="74"/>
    </location>
    <ligand>
        <name>UMP</name>
        <dbReference type="ChEBI" id="CHEBI:57865"/>
    </ligand>
</feature>
<feature type="binding site" evidence="1">
    <location>
        <begin position="135"/>
        <end position="142"/>
    </location>
    <ligand>
        <name>UMP</name>
        <dbReference type="ChEBI" id="CHEBI:57865"/>
    </ligand>
</feature>
<feature type="binding site" evidence="1">
    <location>
        <position position="168"/>
    </location>
    <ligand>
        <name>ATP</name>
        <dbReference type="ChEBI" id="CHEBI:30616"/>
    </ligand>
</feature>
<feature type="binding site" evidence="1">
    <location>
        <position position="171"/>
    </location>
    <ligand>
        <name>ATP</name>
        <dbReference type="ChEBI" id="CHEBI:30616"/>
    </ligand>
</feature>
<sequence>MQKPKYKRIVLKLSGEALAGHNTYGIDNEVLNSIARQVVEVVRQEVQVAIVVGGGNIWRGVAGSAKGMDRATADYMGMLATVINALALQDALEQEGMGTRVMSAIEMKEVCEPYIRRRAIRHLEKGRVTIFAAGTGNPYFSTDTAAALRSAEIEAEVILMAKKVDGVYDADPVKNPAALKFDRLNYIDVLSRGLGVMDSTAASLCMDNGIPIIVFDLTREGNILKAVLGEEIGTYVGR</sequence>
<reference key="1">
    <citation type="journal article" date="2010" name="Environ. Microbiol.">
        <title>The genome of Syntrophomonas wolfei: new insights into syntrophic metabolism and biohydrogen production.</title>
        <authorList>
            <person name="Sieber J.R."/>
            <person name="Sims D.R."/>
            <person name="Han C."/>
            <person name="Kim E."/>
            <person name="Lykidis A."/>
            <person name="Lapidus A.L."/>
            <person name="McDonnald E."/>
            <person name="Rohlin L."/>
            <person name="Culley D.E."/>
            <person name="Gunsalus R."/>
            <person name="McInerney M.J."/>
        </authorList>
    </citation>
    <scope>NUCLEOTIDE SEQUENCE [LARGE SCALE GENOMIC DNA]</scope>
    <source>
        <strain>DSM 2245B / Goettingen</strain>
    </source>
</reference>
<comment type="function">
    <text evidence="1">Catalyzes the reversible phosphorylation of UMP to UDP.</text>
</comment>
<comment type="catalytic activity">
    <reaction evidence="1">
        <text>UMP + ATP = UDP + ADP</text>
        <dbReference type="Rhea" id="RHEA:24400"/>
        <dbReference type="ChEBI" id="CHEBI:30616"/>
        <dbReference type="ChEBI" id="CHEBI:57865"/>
        <dbReference type="ChEBI" id="CHEBI:58223"/>
        <dbReference type="ChEBI" id="CHEBI:456216"/>
        <dbReference type="EC" id="2.7.4.22"/>
    </reaction>
</comment>
<comment type="activity regulation">
    <text evidence="1">Inhibited by UTP.</text>
</comment>
<comment type="pathway">
    <text evidence="1">Pyrimidine metabolism; CTP biosynthesis via de novo pathway; UDP from UMP (UMPK route): step 1/1.</text>
</comment>
<comment type="subunit">
    <text evidence="1">Homohexamer.</text>
</comment>
<comment type="subcellular location">
    <subcellularLocation>
        <location evidence="1">Cytoplasm</location>
    </subcellularLocation>
</comment>
<comment type="similarity">
    <text evidence="1">Belongs to the UMP kinase family.</text>
</comment>
<dbReference type="EC" id="2.7.4.22" evidence="1"/>
<dbReference type="EMBL" id="CP000448">
    <property type="protein sequence ID" value="ABI68202.1"/>
    <property type="molecule type" value="Genomic_DNA"/>
</dbReference>
<dbReference type="RefSeq" id="WP_011640307.1">
    <property type="nucleotide sequence ID" value="NC_008346.1"/>
</dbReference>
<dbReference type="SMR" id="Q0AYK2"/>
<dbReference type="STRING" id="335541.Swol_0884"/>
<dbReference type="KEGG" id="swo:Swol_0884"/>
<dbReference type="eggNOG" id="COG0528">
    <property type="taxonomic scope" value="Bacteria"/>
</dbReference>
<dbReference type="HOGENOM" id="CLU_033861_0_0_9"/>
<dbReference type="OrthoDB" id="9807458at2"/>
<dbReference type="UniPathway" id="UPA00159">
    <property type="reaction ID" value="UER00275"/>
</dbReference>
<dbReference type="Proteomes" id="UP000001968">
    <property type="component" value="Chromosome"/>
</dbReference>
<dbReference type="GO" id="GO:0005737">
    <property type="term" value="C:cytoplasm"/>
    <property type="evidence" value="ECO:0007669"/>
    <property type="project" value="UniProtKB-SubCell"/>
</dbReference>
<dbReference type="GO" id="GO:0005524">
    <property type="term" value="F:ATP binding"/>
    <property type="evidence" value="ECO:0007669"/>
    <property type="project" value="UniProtKB-KW"/>
</dbReference>
<dbReference type="GO" id="GO:0033862">
    <property type="term" value="F:UMP kinase activity"/>
    <property type="evidence" value="ECO:0007669"/>
    <property type="project" value="UniProtKB-EC"/>
</dbReference>
<dbReference type="GO" id="GO:0044210">
    <property type="term" value="P:'de novo' CTP biosynthetic process"/>
    <property type="evidence" value="ECO:0007669"/>
    <property type="project" value="UniProtKB-UniRule"/>
</dbReference>
<dbReference type="GO" id="GO:0006225">
    <property type="term" value="P:UDP biosynthetic process"/>
    <property type="evidence" value="ECO:0007669"/>
    <property type="project" value="TreeGrafter"/>
</dbReference>
<dbReference type="CDD" id="cd04254">
    <property type="entry name" value="AAK_UMPK-PyrH-Ec"/>
    <property type="match status" value="1"/>
</dbReference>
<dbReference type="FunFam" id="3.40.1160.10:FF:000001">
    <property type="entry name" value="Uridylate kinase"/>
    <property type="match status" value="1"/>
</dbReference>
<dbReference type="Gene3D" id="3.40.1160.10">
    <property type="entry name" value="Acetylglutamate kinase-like"/>
    <property type="match status" value="1"/>
</dbReference>
<dbReference type="HAMAP" id="MF_01220_B">
    <property type="entry name" value="PyrH_B"/>
    <property type="match status" value="1"/>
</dbReference>
<dbReference type="InterPro" id="IPR036393">
    <property type="entry name" value="AceGlu_kinase-like_sf"/>
</dbReference>
<dbReference type="InterPro" id="IPR001048">
    <property type="entry name" value="Asp/Glu/Uridylate_kinase"/>
</dbReference>
<dbReference type="InterPro" id="IPR011817">
    <property type="entry name" value="Uridylate_kinase"/>
</dbReference>
<dbReference type="InterPro" id="IPR015963">
    <property type="entry name" value="Uridylate_kinase_bac"/>
</dbReference>
<dbReference type="NCBIfam" id="TIGR02075">
    <property type="entry name" value="pyrH_bact"/>
    <property type="match status" value="1"/>
</dbReference>
<dbReference type="PANTHER" id="PTHR42833">
    <property type="entry name" value="URIDYLATE KINASE"/>
    <property type="match status" value="1"/>
</dbReference>
<dbReference type="PANTHER" id="PTHR42833:SF4">
    <property type="entry name" value="URIDYLATE KINASE PUMPKIN, CHLOROPLASTIC"/>
    <property type="match status" value="1"/>
</dbReference>
<dbReference type="Pfam" id="PF00696">
    <property type="entry name" value="AA_kinase"/>
    <property type="match status" value="1"/>
</dbReference>
<dbReference type="PIRSF" id="PIRSF005650">
    <property type="entry name" value="Uridylate_kin"/>
    <property type="match status" value="1"/>
</dbReference>
<dbReference type="SUPFAM" id="SSF53633">
    <property type="entry name" value="Carbamate kinase-like"/>
    <property type="match status" value="1"/>
</dbReference>
<protein>
    <recommendedName>
        <fullName evidence="1">Uridylate kinase</fullName>
        <shortName evidence="1">UK</shortName>
        <ecNumber evidence="1">2.7.4.22</ecNumber>
    </recommendedName>
    <alternativeName>
        <fullName evidence="1">Uridine monophosphate kinase</fullName>
        <shortName evidence="1">UMP kinase</shortName>
        <shortName evidence="1">UMPK</shortName>
    </alternativeName>
</protein>
<evidence type="ECO:0000255" key="1">
    <source>
        <dbReference type="HAMAP-Rule" id="MF_01220"/>
    </source>
</evidence>
<organism>
    <name type="scientific">Syntrophomonas wolfei subsp. wolfei (strain DSM 2245B / Goettingen)</name>
    <dbReference type="NCBI Taxonomy" id="335541"/>
    <lineage>
        <taxon>Bacteria</taxon>
        <taxon>Bacillati</taxon>
        <taxon>Bacillota</taxon>
        <taxon>Clostridia</taxon>
        <taxon>Eubacteriales</taxon>
        <taxon>Syntrophomonadaceae</taxon>
        <taxon>Syntrophomonas</taxon>
    </lineage>
</organism>
<accession>Q0AYK2</accession>
<name>PYRH_SYNWW</name>
<proteinExistence type="inferred from homology"/>